<organismHost>
    <name type="scientific">Escherichia coli</name>
    <dbReference type="NCBI Taxonomy" id="562"/>
</organismHost>
<organism>
    <name type="scientific">Enterobacteria phage 434</name>
    <name type="common">Bacteriophage 434</name>
    <dbReference type="NCBI Taxonomy" id="10712"/>
    <lineage>
        <taxon>Viruses</taxon>
        <taxon>Duplodnaviria</taxon>
        <taxon>Heunggongvirae</taxon>
        <taxon>Uroviricota</taxon>
        <taxon>Caudoviricetes</taxon>
        <taxon>Lambdavirus</taxon>
        <taxon>Lambdavirus lambda</taxon>
    </lineage>
</organism>
<dbReference type="EMBL" id="V00639">
    <property type="protein sequence ID" value="CAA23985.1"/>
    <property type="molecule type" value="Genomic_DNA"/>
</dbReference>
<dbReference type="SMR" id="P68925"/>
<dbReference type="InterPro" id="IPR031894">
    <property type="entry name" value="RexA"/>
</dbReference>
<dbReference type="Pfam" id="PF15969">
    <property type="entry name" value="RexA"/>
    <property type="match status" value="1"/>
</dbReference>
<sequence>MKNGFYATYRSKNKGKDKRSINLSVFLNSLLADNHHLQVGSNYLYIHKIDGKTFLFTKTNDKSLVQKINRSKASVEDIKNSLADDESLGFPSFLFVEGDTIGFARTVFGPTTSDLTDFLIGKGMSLSSGERVQIEPLMRGTTKDDVMHMHFIGRTTVKVEAKLPVFGDILKVLGATDIEGELFDSLDIVIKPKFKRDIKKVAKDIIFNPSPQFSDISLRAKDEAGDILTEHYLSEKGHLSAPLNKVTNAEIAEEMAYCYARMKSDILECFKRQVGKVKD</sequence>
<feature type="chain" id="PRO_0000077707" description="Protein rexA">
    <location>
        <begin position="1"/>
        <end position="279"/>
    </location>
</feature>
<protein>
    <recommendedName>
        <fullName>Protein rexA</fullName>
    </recommendedName>
</protein>
<name>REXA_BP434</name>
<evidence type="ECO:0000250" key="1"/>
<accession>P68925</accession>
<accession>P03760</accession>
<comment type="function">
    <text evidence="1">Inhibits the growth of unrelated coliphages, including T4rII, T5lr, T1, and some mutants of T7, P22, phi-80, and lambda. It controls the activity of gene S and may inhibit the establishment of lysogeny by the repressor protein (By similarity).</text>
</comment>
<gene>
    <name type="primary">rexA</name>
    <name type="synonym">rex</name>
</gene>
<reference key="1">
    <citation type="thesis" date="1980" institute="University of Cologne" country="Germany">
        <authorList>
            <person name="Landsmann J."/>
        </authorList>
    </citation>
    <scope>NUCLEOTIDE SEQUENCE [GENOMIC DNA]</scope>
</reference>
<proteinExistence type="inferred from homology"/>